<comment type="function">
    <text evidence="1">Located on the platform of the 30S subunit, it bridges several disparate RNA helices of the 16S rRNA. Forms part of the Shine-Dalgarno cleft in the 70S ribosome.</text>
</comment>
<comment type="subunit">
    <text evidence="1">Part of the 30S ribosomal subunit. Interacts with proteins S7 and S18. Binds to IF-3.</text>
</comment>
<comment type="similarity">
    <text evidence="1">Belongs to the universal ribosomal protein uS11 family.</text>
</comment>
<organism>
    <name type="scientific">Bacillus anthracis (strain CDC 684 / NRRL 3495)</name>
    <dbReference type="NCBI Taxonomy" id="568206"/>
    <lineage>
        <taxon>Bacteria</taxon>
        <taxon>Bacillati</taxon>
        <taxon>Bacillota</taxon>
        <taxon>Bacilli</taxon>
        <taxon>Bacillales</taxon>
        <taxon>Bacillaceae</taxon>
        <taxon>Bacillus</taxon>
        <taxon>Bacillus cereus group</taxon>
    </lineage>
</organism>
<name>RS11_BACAC</name>
<protein>
    <recommendedName>
        <fullName evidence="1">Small ribosomal subunit protein uS11</fullName>
    </recommendedName>
    <alternativeName>
        <fullName evidence="2">30S ribosomal protein S11</fullName>
    </alternativeName>
</protein>
<proteinExistence type="inferred from homology"/>
<gene>
    <name evidence="1" type="primary">rpsK</name>
    <name type="ordered locus">BAMEG_0152</name>
</gene>
<dbReference type="EMBL" id="CP001215">
    <property type="protein sequence ID" value="ACP15047.1"/>
    <property type="molecule type" value="Genomic_DNA"/>
</dbReference>
<dbReference type="RefSeq" id="WP_000101799.1">
    <property type="nucleotide sequence ID" value="NC_012581.1"/>
</dbReference>
<dbReference type="SMR" id="C3LJX0"/>
<dbReference type="GeneID" id="93010917"/>
<dbReference type="KEGG" id="bah:BAMEG_0152"/>
<dbReference type="HOGENOM" id="CLU_072439_5_0_9"/>
<dbReference type="GO" id="GO:1990904">
    <property type="term" value="C:ribonucleoprotein complex"/>
    <property type="evidence" value="ECO:0007669"/>
    <property type="project" value="UniProtKB-KW"/>
</dbReference>
<dbReference type="GO" id="GO:0005840">
    <property type="term" value="C:ribosome"/>
    <property type="evidence" value="ECO:0007669"/>
    <property type="project" value="UniProtKB-KW"/>
</dbReference>
<dbReference type="GO" id="GO:0019843">
    <property type="term" value="F:rRNA binding"/>
    <property type="evidence" value="ECO:0007669"/>
    <property type="project" value="UniProtKB-UniRule"/>
</dbReference>
<dbReference type="GO" id="GO:0003735">
    <property type="term" value="F:structural constituent of ribosome"/>
    <property type="evidence" value="ECO:0007669"/>
    <property type="project" value="InterPro"/>
</dbReference>
<dbReference type="GO" id="GO:0006412">
    <property type="term" value="P:translation"/>
    <property type="evidence" value="ECO:0007669"/>
    <property type="project" value="UniProtKB-UniRule"/>
</dbReference>
<dbReference type="FunFam" id="3.30.420.80:FF:000001">
    <property type="entry name" value="30S ribosomal protein S11"/>
    <property type="match status" value="1"/>
</dbReference>
<dbReference type="Gene3D" id="3.30.420.80">
    <property type="entry name" value="Ribosomal protein S11"/>
    <property type="match status" value="1"/>
</dbReference>
<dbReference type="HAMAP" id="MF_01310">
    <property type="entry name" value="Ribosomal_uS11"/>
    <property type="match status" value="1"/>
</dbReference>
<dbReference type="InterPro" id="IPR001971">
    <property type="entry name" value="Ribosomal_uS11"/>
</dbReference>
<dbReference type="InterPro" id="IPR019981">
    <property type="entry name" value="Ribosomal_uS11_bac-type"/>
</dbReference>
<dbReference type="InterPro" id="IPR018102">
    <property type="entry name" value="Ribosomal_uS11_CS"/>
</dbReference>
<dbReference type="InterPro" id="IPR036967">
    <property type="entry name" value="Ribosomal_uS11_sf"/>
</dbReference>
<dbReference type="NCBIfam" id="NF003698">
    <property type="entry name" value="PRK05309.1"/>
    <property type="match status" value="1"/>
</dbReference>
<dbReference type="NCBIfam" id="TIGR03632">
    <property type="entry name" value="uS11_bact"/>
    <property type="match status" value="1"/>
</dbReference>
<dbReference type="PANTHER" id="PTHR11759">
    <property type="entry name" value="40S RIBOSOMAL PROTEIN S14/30S RIBOSOMAL PROTEIN S11"/>
    <property type="match status" value="1"/>
</dbReference>
<dbReference type="Pfam" id="PF00411">
    <property type="entry name" value="Ribosomal_S11"/>
    <property type="match status" value="1"/>
</dbReference>
<dbReference type="PIRSF" id="PIRSF002131">
    <property type="entry name" value="Ribosomal_S11"/>
    <property type="match status" value="1"/>
</dbReference>
<dbReference type="SUPFAM" id="SSF53137">
    <property type="entry name" value="Translational machinery components"/>
    <property type="match status" value="1"/>
</dbReference>
<dbReference type="PROSITE" id="PS00054">
    <property type="entry name" value="RIBOSOMAL_S11"/>
    <property type="match status" value="1"/>
</dbReference>
<keyword id="KW-0687">Ribonucleoprotein</keyword>
<keyword id="KW-0689">Ribosomal protein</keyword>
<keyword id="KW-0694">RNA-binding</keyword>
<keyword id="KW-0699">rRNA-binding</keyword>
<sequence>MARKTNTRKKRVKKNIEAGVAHIRSTFNNTIVTLTDTHGNALSWSSAGALGFRGSRKSTPFAAQMAAETAAKAAMEHGLKTLEVTVKGPGAGREAAIRALQAAGLEVTAIRDVTPVPHNGCRPPKRRRV</sequence>
<feature type="chain" id="PRO_1000165528" description="Small ribosomal subunit protein uS11">
    <location>
        <begin position="1"/>
        <end position="129"/>
    </location>
</feature>
<accession>C3LJX0</accession>
<reference key="1">
    <citation type="submission" date="2008-10" db="EMBL/GenBank/DDBJ databases">
        <title>Genome sequence of Bacillus anthracis str. CDC 684.</title>
        <authorList>
            <person name="Dodson R.J."/>
            <person name="Munk A.C."/>
            <person name="Brettin T."/>
            <person name="Bruce D."/>
            <person name="Detter C."/>
            <person name="Tapia R."/>
            <person name="Han C."/>
            <person name="Sutton G."/>
            <person name="Sims D."/>
        </authorList>
    </citation>
    <scope>NUCLEOTIDE SEQUENCE [LARGE SCALE GENOMIC DNA]</scope>
    <source>
        <strain>CDC 684 / NRRL 3495</strain>
    </source>
</reference>
<evidence type="ECO:0000255" key="1">
    <source>
        <dbReference type="HAMAP-Rule" id="MF_01310"/>
    </source>
</evidence>
<evidence type="ECO:0000305" key="2"/>